<proteinExistence type="inferred from homology"/>
<dbReference type="EC" id="2.8.1.10" evidence="1"/>
<dbReference type="EMBL" id="CU928163">
    <property type="protein sequence ID" value="CAR15638.1"/>
    <property type="molecule type" value="Genomic_DNA"/>
</dbReference>
<dbReference type="RefSeq" id="WP_000944114.1">
    <property type="nucleotide sequence ID" value="NC_011751.1"/>
</dbReference>
<dbReference type="RefSeq" id="YP_002415128.1">
    <property type="nucleotide sequence ID" value="NC_011751.1"/>
</dbReference>
<dbReference type="SMR" id="B7NFT1"/>
<dbReference type="STRING" id="585056.ECUMN_4514"/>
<dbReference type="KEGG" id="eum:ECUMN_4514"/>
<dbReference type="PATRIC" id="fig|585056.7.peg.4684"/>
<dbReference type="HOGENOM" id="CLU_062233_1_0_6"/>
<dbReference type="UniPathway" id="UPA00060"/>
<dbReference type="Proteomes" id="UP000007097">
    <property type="component" value="Chromosome"/>
</dbReference>
<dbReference type="GO" id="GO:0005737">
    <property type="term" value="C:cytoplasm"/>
    <property type="evidence" value="ECO:0007669"/>
    <property type="project" value="UniProtKB-SubCell"/>
</dbReference>
<dbReference type="GO" id="GO:1990107">
    <property type="term" value="F:thiazole synthase activity"/>
    <property type="evidence" value="ECO:0007669"/>
    <property type="project" value="UniProtKB-EC"/>
</dbReference>
<dbReference type="GO" id="GO:0009229">
    <property type="term" value="P:thiamine diphosphate biosynthetic process"/>
    <property type="evidence" value="ECO:0007669"/>
    <property type="project" value="UniProtKB-UniRule"/>
</dbReference>
<dbReference type="CDD" id="cd04728">
    <property type="entry name" value="ThiG"/>
    <property type="match status" value="1"/>
</dbReference>
<dbReference type="FunFam" id="3.20.20.70:FF:000049">
    <property type="entry name" value="Thiazole synthase"/>
    <property type="match status" value="1"/>
</dbReference>
<dbReference type="Gene3D" id="3.20.20.70">
    <property type="entry name" value="Aldolase class I"/>
    <property type="match status" value="1"/>
</dbReference>
<dbReference type="HAMAP" id="MF_00443">
    <property type="entry name" value="ThiG"/>
    <property type="match status" value="1"/>
</dbReference>
<dbReference type="InterPro" id="IPR013785">
    <property type="entry name" value="Aldolase_TIM"/>
</dbReference>
<dbReference type="InterPro" id="IPR033983">
    <property type="entry name" value="Thiazole_synthase_ThiG"/>
</dbReference>
<dbReference type="InterPro" id="IPR008867">
    <property type="entry name" value="ThiG"/>
</dbReference>
<dbReference type="PANTHER" id="PTHR34266">
    <property type="entry name" value="THIAZOLE SYNTHASE"/>
    <property type="match status" value="1"/>
</dbReference>
<dbReference type="PANTHER" id="PTHR34266:SF2">
    <property type="entry name" value="THIAZOLE SYNTHASE"/>
    <property type="match status" value="1"/>
</dbReference>
<dbReference type="Pfam" id="PF05690">
    <property type="entry name" value="ThiG"/>
    <property type="match status" value="1"/>
</dbReference>
<dbReference type="SUPFAM" id="SSF110399">
    <property type="entry name" value="ThiG-like"/>
    <property type="match status" value="1"/>
</dbReference>
<gene>
    <name evidence="1" type="primary">thiG</name>
    <name type="ordered locus">ECUMN_4514</name>
</gene>
<sequence length="256" mass="26900">MLRIADKTFDSHLFTGTGKFASSQLMVESIRASGSQLVTLAMKRVDLRQHNDAILEPLIAAGVTLLPNTSGAKTAEEAIFAAHLAREALGTNWLKLEIHPDARWLLPDPIETLKAAETLVQQGFVVLPYCGADPVLCKRLEEVGCAAVMPLGAPIGSNQGLETRAMLEIIIQQATVPVVVDAGIGVPSHAAQALEMGADAVLVNTAIAIADDPVNMAKAFRLAVEAGLLARQSGPGSRSHFAHATSPLTGFLEASA</sequence>
<reference key="1">
    <citation type="journal article" date="2009" name="PLoS Genet.">
        <title>Organised genome dynamics in the Escherichia coli species results in highly diverse adaptive paths.</title>
        <authorList>
            <person name="Touchon M."/>
            <person name="Hoede C."/>
            <person name="Tenaillon O."/>
            <person name="Barbe V."/>
            <person name="Baeriswyl S."/>
            <person name="Bidet P."/>
            <person name="Bingen E."/>
            <person name="Bonacorsi S."/>
            <person name="Bouchier C."/>
            <person name="Bouvet O."/>
            <person name="Calteau A."/>
            <person name="Chiapello H."/>
            <person name="Clermont O."/>
            <person name="Cruveiller S."/>
            <person name="Danchin A."/>
            <person name="Diard M."/>
            <person name="Dossat C."/>
            <person name="Karoui M.E."/>
            <person name="Frapy E."/>
            <person name="Garry L."/>
            <person name="Ghigo J.M."/>
            <person name="Gilles A.M."/>
            <person name="Johnson J."/>
            <person name="Le Bouguenec C."/>
            <person name="Lescat M."/>
            <person name="Mangenot S."/>
            <person name="Martinez-Jehanne V."/>
            <person name="Matic I."/>
            <person name="Nassif X."/>
            <person name="Oztas S."/>
            <person name="Petit M.A."/>
            <person name="Pichon C."/>
            <person name="Rouy Z."/>
            <person name="Ruf C.S."/>
            <person name="Schneider D."/>
            <person name="Tourret J."/>
            <person name="Vacherie B."/>
            <person name="Vallenet D."/>
            <person name="Medigue C."/>
            <person name="Rocha E.P.C."/>
            <person name="Denamur E."/>
        </authorList>
    </citation>
    <scope>NUCLEOTIDE SEQUENCE [LARGE SCALE GENOMIC DNA]</scope>
    <source>
        <strain>UMN026 / ExPEC</strain>
    </source>
</reference>
<keyword id="KW-0963">Cytoplasm</keyword>
<keyword id="KW-0704">Schiff base</keyword>
<keyword id="KW-0784">Thiamine biosynthesis</keyword>
<keyword id="KW-0808">Transferase</keyword>
<evidence type="ECO:0000255" key="1">
    <source>
        <dbReference type="HAMAP-Rule" id="MF_00443"/>
    </source>
</evidence>
<organism>
    <name type="scientific">Escherichia coli O17:K52:H18 (strain UMN026 / ExPEC)</name>
    <dbReference type="NCBI Taxonomy" id="585056"/>
    <lineage>
        <taxon>Bacteria</taxon>
        <taxon>Pseudomonadati</taxon>
        <taxon>Pseudomonadota</taxon>
        <taxon>Gammaproteobacteria</taxon>
        <taxon>Enterobacterales</taxon>
        <taxon>Enterobacteriaceae</taxon>
        <taxon>Escherichia</taxon>
    </lineage>
</organism>
<accession>B7NFT1</accession>
<name>THIG_ECOLU</name>
<protein>
    <recommendedName>
        <fullName evidence="1">Thiazole synthase</fullName>
        <ecNumber evidence="1">2.8.1.10</ecNumber>
    </recommendedName>
</protein>
<comment type="function">
    <text evidence="1">Catalyzes the rearrangement of 1-deoxy-D-xylulose 5-phosphate (DXP) to produce the thiazole phosphate moiety of thiamine. Sulfur is provided by the thiocarboxylate moiety of the carrier protein ThiS. In vitro, sulfur can be provided by H(2)S.</text>
</comment>
<comment type="catalytic activity">
    <reaction evidence="1">
        <text>[ThiS sulfur-carrier protein]-C-terminal-Gly-aminoethanethioate + 2-iminoacetate + 1-deoxy-D-xylulose 5-phosphate = [ThiS sulfur-carrier protein]-C-terminal Gly-Gly + 2-[(2R,5Z)-2-carboxy-4-methylthiazol-5(2H)-ylidene]ethyl phosphate + 2 H2O + H(+)</text>
        <dbReference type="Rhea" id="RHEA:26297"/>
        <dbReference type="Rhea" id="RHEA-COMP:12909"/>
        <dbReference type="Rhea" id="RHEA-COMP:19908"/>
        <dbReference type="ChEBI" id="CHEBI:15377"/>
        <dbReference type="ChEBI" id="CHEBI:15378"/>
        <dbReference type="ChEBI" id="CHEBI:57792"/>
        <dbReference type="ChEBI" id="CHEBI:62899"/>
        <dbReference type="ChEBI" id="CHEBI:77846"/>
        <dbReference type="ChEBI" id="CHEBI:90778"/>
        <dbReference type="ChEBI" id="CHEBI:232372"/>
        <dbReference type="EC" id="2.8.1.10"/>
    </reaction>
</comment>
<comment type="pathway">
    <text evidence="1">Cofactor biosynthesis; thiamine diphosphate biosynthesis.</text>
</comment>
<comment type="subunit">
    <text evidence="1">Homotetramer. Forms heterodimers with either ThiH or ThiS.</text>
</comment>
<comment type="subcellular location">
    <subcellularLocation>
        <location evidence="1">Cytoplasm</location>
    </subcellularLocation>
</comment>
<comment type="similarity">
    <text evidence="1">Belongs to the ThiG family.</text>
</comment>
<feature type="chain" id="PRO_1000196858" description="Thiazole synthase">
    <location>
        <begin position="1"/>
        <end position="256"/>
    </location>
</feature>
<feature type="active site" description="Schiff-base intermediate with DXP" evidence="1">
    <location>
        <position position="95"/>
    </location>
</feature>
<feature type="binding site" evidence="1">
    <location>
        <position position="156"/>
    </location>
    <ligand>
        <name>1-deoxy-D-xylulose 5-phosphate</name>
        <dbReference type="ChEBI" id="CHEBI:57792"/>
    </ligand>
</feature>
<feature type="binding site" evidence="1">
    <location>
        <begin position="182"/>
        <end position="183"/>
    </location>
    <ligand>
        <name>1-deoxy-D-xylulose 5-phosphate</name>
        <dbReference type="ChEBI" id="CHEBI:57792"/>
    </ligand>
</feature>
<feature type="binding site" evidence="1">
    <location>
        <begin position="204"/>
        <end position="205"/>
    </location>
    <ligand>
        <name>1-deoxy-D-xylulose 5-phosphate</name>
        <dbReference type="ChEBI" id="CHEBI:57792"/>
    </ligand>
</feature>